<comment type="function">
    <text evidence="1">Aquaporins facilitate the transport of water and small neutral solutes across cell membranes.</text>
</comment>
<comment type="subcellular location">
    <subcellularLocation>
        <location evidence="1">Vacuole membrane</location>
        <topology evidence="1">Multi-pass membrane protein</topology>
    </subcellularLocation>
    <text>Tonoplast.</text>
</comment>
<comment type="domain">
    <text>Aquaporins contain two tandem repeats each containing three membrane-spanning domains and a pore-forming loop with the signature motif Asn-Pro-Ala (NPA).</text>
</comment>
<comment type="similarity">
    <text evidence="3">Belongs to the MIP/aquaporin (TC 1.A.8) family. TIP (TC 1.A.8.10) subfamily.</text>
</comment>
<accession>Q9ATL7</accession>
<dbReference type="EMBL" id="AF326504">
    <property type="protein sequence ID" value="AAK26771.1"/>
    <property type="molecule type" value="mRNA"/>
</dbReference>
<dbReference type="RefSeq" id="NP_001105032.1">
    <property type="nucleotide sequence ID" value="NM_001111562.1"/>
</dbReference>
<dbReference type="SMR" id="Q9ATL7"/>
<dbReference type="FunCoup" id="Q9ATL7">
    <property type="interactions" value="415"/>
</dbReference>
<dbReference type="STRING" id="4577.Q9ATL7"/>
<dbReference type="PaxDb" id="4577-GRMZM2G305446_P01"/>
<dbReference type="EnsemblPlants" id="Zm00001eb221090_T002">
    <property type="protein sequence ID" value="Zm00001eb221090_P002"/>
    <property type="gene ID" value="Zm00001eb221090"/>
</dbReference>
<dbReference type="GeneID" id="541896"/>
<dbReference type="Gramene" id="Zm00001eb221090_T002">
    <property type="protein sequence ID" value="Zm00001eb221090_P002"/>
    <property type="gene ID" value="Zm00001eb221090"/>
</dbReference>
<dbReference type="KEGG" id="zma:541896"/>
<dbReference type="eggNOG" id="KOG0223">
    <property type="taxonomic scope" value="Eukaryota"/>
</dbReference>
<dbReference type="HOGENOM" id="CLU_020019_3_4_1"/>
<dbReference type="InParanoid" id="Q9ATL7"/>
<dbReference type="OMA" id="LALNTMH"/>
<dbReference type="OrthoDB" id="3222at2759"/>
<dbReference type="Proteomes" id="UP000007305">
    <property type="component" value="Chromosome 5"/>
</dbReference>
<dbReference type="ExpressionAtlas" id="Q9ATL7">
    <property type="expression patterns" value="baseline and differential"/>
</dbReference>
<dbReference type="GO" id="GO:0016020">
    <property type="term" value="C:membrane"/>
    <property type="evidence" value="ECO:0000318"/>
    <property type="project" value="GO_Central"/>
</dbReference>
<dbReference type="GO" id="GO:0032586">
    <property type="term" value="C:protein storage vacuole membrane"/>
    <property type="evidence" value="ECO:0000304"/>
    <property type="project" value="AgBase"/>
</dbReference>
<dbReference type="GO" id="GO:0015250">
    <property type="term" value="F:water channel activity"/>
    <property type="evidence" value="ECO:0000318"/>
    <property type="project" value="GO_Central"/>
</dbReference>
<dbReference type="GO" id="GO:0006833">
    <property type="term" value="P:water transport"/>
    <property type="evidence" value="ECO:0000318"/>
    <property type="project" value="GO_Central"/>
</dbReference>
<dbReference type="CDD" id="cd00333">
    <property type="entry name" value="MIP"/>
    <property type="match status" value="1"/>
</dbReference>
<dbReference type="FunFam" id="1.20.1080.10:FF:000002">
    <property type="entry name" value="Probable aquaporin TIP1-1"/>
    <property type="match status" value="1"/>
</dbReference>
<dbReference type="Gene3D" id="1.20.1080.10">
    <property type="entry name" value="Glycerol uptake facilitator protein"/>
    <property type="match status" value="1"/>
</dbReference>
<dbReference type="InterPro" id="IPR023271">
    <property type="entry name" value="Aquaporin-like"/>
</dbReference>
<dbReference type="InterPro" id="IPR034294">
    <property type="entry name" value="Aquaporin_transptr"/>
</dbReference>
<dbReference type="InterPro" id="IPR000425">
    <property type="entry name" value="MIP"/>
</dbReference>
<dbReference type="InterPro" id="IPR022357">
    <property type="entry name" value="MIP_CS"/>
</dbReference>
<dbReference type="NCBIfam" id="TIGR00861">
    <property type="entry name" value="MIP"/>
    <property type="match status" value="1"/>
</dbReference>
<dbReference type="PANTHER" id="PTHR45665:SF23">
    <property type="entry name" value="AQUAPORIN TIP3-2-RELATED"/>
    <property type="match status" value="1"/>
</dbReference>
<dbReference type="PANTHER" id="PTHR45665">
    <property type="entry name" value="AQUAPORIN-8"/>
    <property type="match status" value="1"/>
</dbReference>
<dbReference type="Pfam" id="PF00230">
    <property type="entry name" value="MIP"/>
    <property type="match status" value="1"/>
</dbReference>
<dbReference type="PRINTS" id="PR00783">
    <property type="entry name" value="MINTRINSICP"/>
</dbReference>
<dbReference type="SUPFAM" id="SSF81338">
    <property type="entry name" value="Aquaporin-like"/>
    <property type="match status" value="1"/>
</dbReference>
<dbReference type="PROSITE" id="PS00221">
    <property type="entry name" value="MIP"/>
    <property type="match status" value="1"/>
</dbReference>
<feature type="chain" id="PRO_0000286006" description="Aquaporin TIP3-1">
    <location>
        <begin position="1"/>
        <end position="262"/>
    </location>
</feature>
<feature type="transmembrane region" description="Helical; Name=1" evidence="2">
    <location>
        <begin position="27"/>
        <end position="47"/>
    </location>
</feature>
<feature type="transmembrane region" description="Helical; Name=2" evidence="2">
    <location>
        <begin position="61"/>
        <end position="81"/>
    </location>
</feature>
<feature type="transmembrane region" description="Helical; Name=3" evidence="2">
    <location>
        <begin position="104"/>
        <end position="124"/>
    </location>
</feature>
<feature type="transmembrane region" description="Helical; Name=4" evidence="2">
    <location>
        <begin position="148"/>
        <end position="168"/>
    </location>
</feature>
<feature type="transmembrane region" description="Helical; Name=5" evidence="2">
    <location>
        <begin position="175"/>
        <end position="195"/>
    </location>
</feature>
<feature type="transmembrane region" description="Helical; Name=6" evidence="2">
    <location>
        <begin position="223"/>
        <end position="243"/>
    </location>
</feature>
<feature type="short sequence motif" description="NPA 1" evidence="1">
    <location>
        <begin position="89"/>
        <end position="91"/>
    </location>
</feature>
<feature type="short sequence motif" description="NPA 2" evidence="1">
    <location>
        <begin position="203"/>
        <end position="205"/>
    </location>
</feature>
<evidence type="ECO:0000250" key="1"/>
<evidence type="ECO:0000255" key="2"/>
<evidence type="ECO:0000305" key="3"/>
<keyword id="KW-0472">Membrane</keyword>
<keyword id="KW-1185">Reference proteome</keyword>
<keyword id="KW-0677">Repeat</keyword>
<keyword id="KW-0812">Transmembrane</keyword>
<keyword id="KW-1133">Transmembrane helix</keyword>
<keyword id="KW-0813">Transport</keyword>
<keyword id="KW-0926">Vacuole</keyword>
<sequence>MSTGVRPGRRFTVGRSEDATHPDTIRAAISEFIATAIFVFAAEGSVLSLGKMYHDMSTAGGLVAVALAHALALAVAVAVAVNISGGHVNPAVTFGALVGGRVSLVRAVLYWVAQLLGAVAATLLLRLATGGMRPPGFALASGVGDWHAVLLEAVMTFGLMYAYYATVIDPKRGHVGTIAPLAVGFLLGANVLAGGPFDGAGMNPARVFGPALVGWRWRHHWVYWLGPFLGAGLAGLVYEYLVIPSADAAVPHAHQPLAPEDY</sequence>
<protein>
    <recommendedName>
        <fullName>Aquaporin TIP3-1</fullName>
    </recommendedName>
    <alternativeName>
        <fullName>Tonoplast intrinsic protein 3-1</fullName>
    </alternativeName>
    <alternativeName>
        <fullName>ZmTIP3-1</fullName>
    </alternativeName>
    <alternativeName>
        <fullName>ZmTIP3;1</fullName>
    </alternativeName>
</protein>
<reference key="1">
    <citation type="journal article" date="2001" name="Plant Physiol.">
        <title>Aquaporins constitute a large and highly divergent protein family in maize.</title>
        <authorList>
            <person name="Chaumont F."/>
            <person name="Barrieu F."/>
            <person name="Wojcik E."/>
            <person name="Chrispeels M.J."/>
            <person name="Jung R."/>
        </authorList>
    </citation>
    <scope>NUCLEOTIDE SEQUENCE [MRNA]</scope>
    <scope>GENE FAMILY</scope>
    <scope>NOMENCLATURE</scope>
    <source>
        <strain>cv. B73</strain>
    </source>
</reference>
<organism>
    <name type="scientific">Zea mays</name>
    <name type="common">Maize</name>
    <dbReference type="NCBI Taxonomy" id="4577"/>
    <lineage>
        <taxon>Eukaryota</taxon>
        <taxon>Viridiplantae</taxon>
        <taxon>Streptophyta</taxon>
        <taxon>Embryophyta</taxon>
        <taxon>Tracheophyta</taxon>
        <taxon>Spermatophyta</taxon>
        <taxon>Magnoliopsida</taxon>
        <taxon>Liliopsida</taxon>
        <taxon>Poales</taxon>
        <taxon>Poaceae</taxon>
        <taxon>PACMAD clade</taxon>
        <taxon>Panicoideae</taxon>
        <taxon>Andropogonodae</taxon>
        <taxon>Andropogoneae</taxon>
        <taxon>Tripsacinae</taxon>
        <taxon>Zea</taxon>
    </lineage>
</organism>
<proteinExistence type="evidence at transcript level"/>
<gene>
    <name type="primary">TIP3-1</name>
</gene>
<name>TIP31_MAIZE</name>